<accession>Q5RC52</accession>
<accession>Q2IBD5</accession>
<accession>Q5R5G7</accession>
<evidence type="ECO:0000250" key="1"/>
<evidence type="ECO:0000255" key="2">
    <source>
        <dbReference type="PROSITE-ProRule" id="PRU00125"/>
    </source>
</evidence>
<evidence type="ECO:0000255" key="3">
    <source>
        <dbReference type="PROSITE-ProRule" id="PRU00636"/>
    </source>
</evidence>
<evidence type="ECO:0000256" key="4">
    <source>
        <dbReference type="SAM" id="MobiDB-lite"/>
    </source>
</evidence>
<evidence type="ECO:0000305" key="5"/>
<dbReference type="EMBL" id="CR858429">
    <property type="protein sequence ID" value="CAH90658.1"/>
    <property type="molecule type" value="mRNA"/>
</dbReference>
<dbReference type="EMBL" id="CR860892">
    <property type="protein sequence ID" value="CAH92999.1"/>
    <property type="molecule type" value="mRNA"/>
</dbReference>
<dbReference type="EMBL" id="DP000026">
    <property type="protein sequence ID" value="ABC87457.1"/>
    <property type="molecule type" value="Genomic_DNA"/>
</dbReference>
<dbReference type="RefSeq" id="NP_001124555.1">
    <property type="nucleotide sequence ID" value="NM_001131083.1"/>
</dbReference>
<dbReference type="SMR" id="Q5RC52"/>
<dbReference type="FunCoup" id="Q5RC52">
    <property type="interactions" value="927"/>
</dbReference>
<dbReference type="STRING" id="9601.ENSPPYP00000020102"/>
<dbReference type="Ensembl" id="ENSPPYT00000020894.3">
    <property type="protein sequence ID" value="ENSPPYP00000020102.2"/>
    <property type="gene ID" value="ENSPPYG00000017929.3"/>
</dbReference>
<dbReference type="GeneID" id="100137029"/>
<dbReference type="KEGG" id="pon:100137029"/>
<dbReference type="CTD" id="26136"/>
<dbReference type="eggNOG" id="KOG1704">
    <property type="taxonomic scope" value="Eukaryota"/>
</dbReference>
<dbReference type="GeneTree" id="ENSGT00940000155993"/>
<dbReference type="HOGENOM" id="CLU_008937_1_1_1"/>
<dbReference type="InParanoid" id="Q5RC52"/>
<dbReference type="OMA" id="NFSCHQC"/>
<dbReference type="OrthoDB" id="10069167at2759"/>
<dbReference type="TreeFam" id="TF313265"/>
<dbReference type="Proteomes" id="UP000001595">
    <property type="component" value="Chromosome 7"/>
</dbReference>
<dbReference type="GO" id="GO:0005737">
    <property type="term" value="C:cytoplasm"/>
    <property type="evidence" value="ECO:0000250"/>
    <property type="project" value="UniProtKB"/>
</dbReference>
<dbReference type="GO" id="GO:0005829">
    <property type="term" value="C:cytosol"/>
    <property type="evidence" value="ECO:0007669"/>
    <property type="project" value="Ensembl"/>
</dbReference>
<dbReference type="GO" id="GO:0005925">
    <property type="term" value="C:focal adhesion"/>
    <property type="evidence" value="ECO:0007669"/>
    <property type="project" value="UniProtKB-SubCell"/>
</dbReference>
<dbReference type="GO" id="GO:0005886">
    <property type="term" value="C:plasma membrane"/>
    <property type="evidence" value="ECO:0007669"/>
    <property type="project" value="Ensembl"/>
</dbReference>
<dbReference type="GO" id="GO:0032991">
    <property type="term" value="C:protein-containing complex"/>
    <property type="evidence" value="ECO:0007669"/>
    <property type="project" value="Ensembl"/>
</dbReference>
<dbReference type="GO" id="GO:0008270">
    <property type="term" value="F:zinc ion binding"/>
    <property type="evidence" value="ECO:0000250"/>
    <property type="project" value="UniProtKB"/>
</dbReference>
<dbReference type="GO" id="GO:0008285">
    <property type="term" value="P:negative regulation of cell population proliferation"/>
    <property type="evidence" value="ECO:0000250"/>
    <property type="project" value="UniProtKB"/>
</dbReference>
<dbReference type="CDD" id="cd09413">
    <property type="entry name" value="LIM1_Testin"/>
    <property type="match status" value="1"/>
</dbReference>
<dbReference type="CDD" id="cd09416">
    <property type="entry name" value="LIM2_Testin"/>
    <property type="match status" value="1"/>
</dbReference>
<dbReference type="CDD" id="cd09419">
    <property type="entry name" value="LIM3_Testin"/>
    <property type="match status" value="1"/>
</dbReference>
<dbReference type="CDD" id="cd09829">
    <property type="entry name" value="PET_testin"/>
    <property type="match status" value="1"/>
</dbReference>
<dbReference type="FunFam" id="2.10.110.10:FF:000061">
    <property type="entry name" value="Testin"/>
    <property type="match status" value="1"/>
</dbReference>
<dbReference type="FunFam" id="2.10.110.10:FF:000065">
    <property type="entry name" value="Testin"/>
    <property type="match status" value="1"/>
</dbReference>
<dbReference type="FunFam" id="2.10.110.10:FF:000005">
    <property type="entry name" value="Testin isoform 1"/>
    <property type="match status" value="1"/>
</dbReference>
<dbReference type="Gene3D" id="2.10.110.10">
    <property type="entry name" value="Cysteine Rich Protein"/>
    <property type="match status" value="3"/>
</dbReference>
<dbReference type="InterPro" id="IPR034958">
    <property type="entry name" value="LIM1_Testin"/>
</dbReference>
<dbReference type="InterPro" id="IPR034959">
    <property type="entry name" value="LIM2_Testin"/>
</dbReference>
<dbReference type="InterPro" id="IPR034960">
    <property type="entry name" value="LIM3_Testin"/>
</dbReference>
<dbReference type="InterPro" id="IPR010442">
    <property type="entry name" value="PET_domain"/>
</dbReference>
<dbReference type="InterPro" id="IPR033724">
    <property type="entry name" value="PET_testin"/>
</dbReference>
<dbReference type="InterPro" id="IPR047120">
    <property type="entry name" value="Pk/Esn/Tes"/>
</dbReference>
<dbReference type="InterPro" id="IPR001781">
    <property type="entry name" value="Znf_LIM"/>
</dbReference>
<dbReference type="PANTHER" id="PTHR24211">
    <property type="entry name" value="LIM DOMAIN-CONTAINING PROTEIN"/>
    <property type="match status" value="1"/>
</dbReference>
<dbReference type="PANTHER" id="PTHR24211:SF1">
    <property type="entry name" value="TESTIN"/>
    <property type="match status" value="1"/>
</dbReference>
<dbReference type="Pfam" id="PF00412">
    <property type="entry name" value="LIM"/>
    <property type="match status" value="3"/>
</dbReference>
<dbReference type="Pfam" id="PF06297">
    <property type="entry name" value="PET"/>
    <property type="match status" value="1"/>
</dbReference>
<dbReference type="SMART" id="SM00132">
    <property type="entry name" value="LIM"/>
    <property type="match status" value="3"/>
</dbReference>
<dbReference type="SUPFAM" id="SSF57716">
    <property type="entry name" value="Glucocorticoid receptor-like (DNA-binding domain)"/>
    <property type="match status" value="2"/>
</dbReference>
<dbReference type="PROSITE" id="PS00478">
    <property type="entry name" value="LIM_DOMAIN_1"/>
    <property type="match status" value="2"/>
</dbReference>
<dbReference type="PROSITE" id="PS50023">
    <property type="entry name" value="LIM_DOMAIN_2"/>
    <property type="match status" value="3"/>
</dbReference>
<dbReference type="PROSITE" id="PS51303">
    <property type="entry name" value="PET"/>
    <property type="match status" value="1"/>
</dbReference>
<proteinExistence type="evidence at transcript level"/>
<name>TES_PONAB</name>
<organism>
    <name type="scientific">Pongo abelii</name>
    <name type="common">Sumatran orangutan</name>
    <name type="synonym">Pongo pygmaeus abelii</name>
    <dbReference type="NCBI Taxonomy" id="9601"/>
    <lineage>
        <taxon>Eukaryota</taxon>
        <taxon>Metazoa</taxon>
        <taxon>Chordata</taxon>
        <taxon>Craniata</taxon>
        <taxon>Vertebrata</taxon>
        <taxon>Euteleostomi</taxon>
        <taxon>Mammalia</taxon>
        <taxon>Eutheria</taxon>
        <taxon>Euarchontoglires</taxon>
        <taxon>Primates</taxon>
        <taxon>Haplorrhini</taxon>
        <taxon>Catarrhini</taxon>
        <taxon>Hominidae</taxon>
        <taxon>Pongo</taxon>
    </lineage>
</organism>
<sequence length="421" mass="47996">MDLENKVKKMGLGHEQGFGAPCLKCKEKCEGFELHFWRKICRNCKCGQEEHDVLLSNEEDRKVGKLFEDTKYTTLIAKLKSDGIPMYKRNVMILTNPVAAKKNVSINTVTYEWAPPVQNQALARQYMQMLPKEKQPVAGSEGAQYRKKQLAKQLPAHDQDPSKCHELSPREVKEMEQFVKKYKSEALGVGDVKLPCEMDAQGPKQMNIPGGDRSTPAAVGAMEDKSAEHKRTQYSCYCCKLSMKEGDPAIYAERAGYDKLWHPACFVCSTCHELLVDMIYFWKNEKLYCGRHYCDSEKPRCAGCDELIFSNEYTQAENQNWHLKHFCCFDCDSILAGEIYVMVNDKPVCKPCYVKNHAVVCQGCHNAIDPEVQRVTYNNFSWHASTECFLCSCCSKCLIGQKFMPVEGMVFCSVECKKRMS</sequence>
<reference key="1">
    <citation type="submission" date="2004-11" db="EMBL/GenBank/DDBJ databases">
        <authorList>
            <consortium name="The German cDNA consortium"/>
        </authorList>
    </citation>
    <scope>NUCLEOTIDE SEQUENCE [LARGE SCALE MRNA]</scope>
    <source>
        <tissue>Kidney</tissue>
    </source>
</reference>
<reference key="2">
    <citation type="journal article" date="2003" name="Nature">
        <title>Comparative analyses of multi-species sequences from targeted genomic regions.</title>
        <authorList>
            <person name="Thomas J.W."/>
            <person name="Touchman J.W."/>
            <person name="Blakesley R.W."/>
            <person name="Bouffard G.G."/>
            <person name="Beckstrom-Sternberg S.M."/>
            <person name="Margulies E.H."/>
            <person name="Blanchette M."/>
            <person name="Siepel A.C."/>
            <person name="Thomas P.J."/>
            <person name="McDowell J.C."/>
            <person name="Maskeri B."/>
            <person name="Hansen N.F."/>
            <person name="Schwartz M.S."/>
            <person name="Weber R.J."/>
            <person name="Kent W.J."/>
            <person name="Karolchik D."/>
            <person name="Bruen T.C."/>
            <person name="Bevan R."/>
            <person name="Cutler D.J."/>
            <person name="Schwartz S."/>
            <person name="Elnitski L."/>
            <person name="Idol J.R."/>
            <person name="Prasad A.B."/>
            <person name="Lee-Lin S.-Q."/>
            <person name="Maduro V.V.B."/>
            <person name="Summers T.J."/>
            <person name="Portnoy M.E."/>
            <person name="Dietrich N.L."/>
            <person name="Akhter N."/>
            <person name="Ayele K."/>
            <person name="Benjamin B."/>
            <person name="Cariaga K."/>
            <person name="Brinkley C.P."/>
            <person name="Brooks S.Y."/>
            <person name="Granite S."/>
            <person name="Guan X."/>
            <person name="Gupta J."/>
            <person name="Haghighi P."/>
            <person name="Ho S.-L."/>
            <person name="Huang M.C."/>
            <person name="Karlins E."/>
            <person name="Laric P.L."/>
            <person name="Legaspi R."/>
            <person name="Lim M.J."/>
            <person name="Maduro Q.L."/>
            <person name="Masiello C.A."/>
            <person name="Mastrian S.D."/>
            <person name="McCloskey J.C."/>
            <person name="Pearson R."/>
            <person name="Stantripop S."/>
            <person name="Tiongson E.E."/>
            <person name="Tran J.T."/>
            <person name="Tsurgeon C."/>
            <person name="Vogt J.L."/>
            <person name="Walker M.A."/>
            <person name="Wetherby K.D."/>
            <person name="Wiggins L.S."/>
            <person name="Young A.C."/>
            <person name="Zhang L.-H."/>
            <person name="Osoegawa K."/>
            <person name="Zhu B."/>
            <person name="Zhao B."/>
            <person name="Shu C.L."/>
            <person name="De Jong P.J."/>
            <person name="Lawrence C.E."/>
            <person name="Smit A.F."/>
            <person name="Chakravarti A."/>
            <person name="Haussler D."/>
            <person name="Green P."/>
            <person name="Miller W."/>
            <person name="Green E.D."/>
        </authorList>
    </citation>
    <scope>NUCLEOTIDE SEQUENCE [LARGE SCALE GENOMIC DNA] OF 39-421</scope>
</reference>
<gene>
    <name type="primary">TES</name>
</gene>
<keyword id="KW-0965">Cell junction</keyword>
<keyword id="KW-0963">Cytoplasm</keyword>
<keyword id="KW-0440">LIM domain</keyword>
<keyword id="KW-0479">Metal-binding</keyword>
<keyword id="KW-1185">Reference proteome</keyword>
<keyword id="KW-0677">Repeat</keyword>
<keyword id="KW-0862">Zinc</keyword>
<comment type="function">
    <text evidence="1">Scaffold protein that may play a role in cell adhesion, cell spreading and in the reorganization of the actin cytoskeleton. Plays a role in the regulation of cell proliferation. May act as a tumor suppressor (By similarity).</text>
</comment>
<comment type="subunit">
    <text evidence="1">Interacts via LIM domain 1 with ZYX. Interacts (via LIM domain 3) with ENAH and VASP. Interacts with ALKBH4, talin, actin, alpha-actinin, GRIP1 and PXN (By similarity). Interacts (via LIM domain 2) with ACTL7A (via N-terminus). Heterodimer with ACTL7A; the heterodimer interacts with ENAH to form a heterotrimer (By similarity).</text>
</comment>
<comment type="subcellular location">
    <subcellularLocation>
        <location evidence="1">Cytoplasm</location>
    </subcellularLocation>
    <subcellularLocation>
        <location evidence="1">Cell junction</location>
        <location evidence="1">Focal adhesion</location>
    </subcellularLocation>
    <text evidence="1">Detected along actin stress fibers.</text>
</comment>
<comment type="domain">
    <text evidence="1">The N-terminal and the C-terminal halves of the protein can associate with each other, thereby hindering interactions with ZYX.</text>
</comment>
<comment type="similarity">
    <text evidence="5">Belongs to the prickle / espinas / testin family.</text>
</comment>
<protein>
    <recommendedName>
        <fullName>Testin</fullName>
    </recommendedName>
</protein>
<feature type="chain" id="PRO_0000278801" description="Testin">
    <location>
        <begin position="1"/>
        <end position="421"/>
    </location>
</feature>
<feature type="domain" description="PET" evidence="3">
    <location>
        <begin position="92"/>
        <end position="199"/>
    </location>
</feature>
<feature type="domain" description="LIM zinc-binding 1" evidence="2">
    <location>
        <begin position="234"/>
        <end position="297"/>
    </location>
</feature>
<feature type="domain" description="LIM zinc-binding 2" evidence="2">
    <location>
        <begin position="299"/>
        <end position="359"/>
    </location>
</feature>
<feature type="domain" description="LIM zinc-binding 3" evidence="2">
    <location>
        <begin position="362"/>
        <end position="421"/>
    </location>
</feature>
<feature type="region of interest" description="Disordered" evidence="4">
    <location>
        <begin position="133"/>
        <end position="164"/>
    </location>
</feature>
<feature type="compositionally biased region" description="Basic and acidic residues" evidence="4">
    <location>
        <begin position="155"/>
        <end position="164"/>
    </location>
</feature>
<feature type="sequence conflict" description="In Ref. 1; CAH92999." evidence="5" ref="1">
    <original>R</original>
    <variation>G</variation>
    <location>
        <position position="213"/>
    </location>
</feature>